<accession>B0SI93</accession>
<proteinExistence type="inferred from homology"/>
<organism>
    <name type="scientific">Leptospira biflexa serovar Patoc (strain Patoc 1 / Ames)</name>
    <dbReference type="NCBI Taxonomy" id="355278"/>
    <lineage>
        <taxon>Bacteria</taxon>
        <taxon>Pseudomonadati</taxon>
        <taxon>Spirochaetota</taxon>
        <taxon>Spirochaetia</taxon>
        <taxon>Leptospirales</taxon>
        <taxon>Leptospiraceae</taxon>
        <taxon>Leptospira</taxon>
    </lineage>
</organism>
<name>SPEE_LEPBA</name>
<feature type="chain" id="PRO_1000099291" description="Polyamine aminopropyltransferase">
    <location>
        <begin position="1"/>
        <end position="281"/>
    </location>
</feature>
<feature type="domain" description="PABS" evidence="1">
    <location>
        <begin position="2"/>
        <end position="237"/>
    </location>
</feature>
<feature type="active site" description="Proton acceptor" evidence="1">
    <location>
        <position position="157"/>
    </location>
</feature>
<feature type="binding site" evidence="1">
    <location>
        <position position="33"/>
    </location>
    <ligand>
        <name>S-methyl-5'-thioadenosine</name>
        <dbReference type="ChEBI" id="CHEBI:17509"/>
    </ligand>
</feature>
<feature type="binding site" evidence="1">
    <location>
        <position position="64"/>
    </location>
    <ligand>
        <name>spermidine</name>
        <dbReference type="ChEBI" id="CHEBI:57834"/>
    </ligand>
</feature>
<feature type="binding site" evidence="1">
    <location>
        <position position="88"/>
    </location>
    <ligand>
        <name>spermidine</name>
        <dbReference type="ChEBI" id="CHEBI:57834"/>
    </ligand>
</feature>
<feature type="binding site" evidence="1">
    <location>
        <position position="108"/>
    </location>
    <ligand>
        <name>S-methyl-5'-thioadenosine</name>
        <dbReference type="ChEBI" id="CHEBI:17509"/>
    </ligand>
</feature>
<feature type="binding site" evidence="1">
    <location>
        <begin position="139"/>
        <end position="140"/>
    </location>
    <ligand>
        <name>S-methyl-5'-thioadenosine</name>
        <dbReference type="ChEBI" id="CHEBI:17509"/>
    </ligand>
</feature>
<feature type="binding site" evidence="1">
    <location>
        <begin position="157"/>
        <end position="160"/>
    </location>
    <ligand>
        <name>spermidine</name>
        <dbReference type="ChEBI" id="CHEBI:57834"/>
    </ligand>
</feature>
<feature type="binding site" evidence="1">
    <location>
        <position position="164"/>
    </location>
    <ligand>
        <name>S-methyl-5'-thioadenosine</name>
        <dbReference type="ChEBI" id="CHEBI:17509"/>
    </ligand>
</feature>
<reference key="1">
    <citation type="journal article" date="2008" name="PLoS ONE">
        <title>Genome sequence of the saprophyte Leptospira biflexa provides insights into the evolution of Leptospira and the pathogenesis of leptospirosis.</title>
        <authorList>
            <person name="Picardeau M."/>
            <person name="Bulach D.M."/>
            <person name="Bouchier C."/>
            <person name="Zuerner R.L."/>
            <person name="Zidane N."/>
            <person name="Wilson P.J."/>
            <person name="Creno S."/>
            <person name="Kuczek E.S."/>
            <person name="Bommezzadri S."/>
            <person name="Davis J.C."/>
            <person name="McGrath A."/>
            <person name="Johnson M.J."/>
            <person name="Boursaux-Eude C."/>
            <person name="Seemann T."/>
            <person name="Rouy Z."/>
            <person name="Coppel R.L."/>
            <person name="Rood J.I."/>
            <person name="Lajus A."/>
            <person name="Davies J.K."/>
            <person name="Medigue C."/>
            <person name="Adler B."/>
        </authorList>
    </citation>
    <scope>NUCLEOTIDE SEQUENCE [LARGE SCALE GENOMIC DNA]</scope>
    <source>
        <strain>Patoc 1 / Ames</strain>
    </source>
</reference>
<gene>
    <name evidence="1" type="primary">speE</name>
    <name type="ordered locus">LBF_4103</name>
</gene>
<dbReference type="EC" id="2.5.1.16" evidence="1"/>
<dbReference type="EMBL" id="CP000778">
    <property type="protein sequence ID" value="ABZ95927.1"/>
    <property type="molecule type" value="Genomic_DNA"/>
</dbReference>
<dbReference type="RefSeq" id="WP_012476580.1">
    <property type="nucleotide sequence ID" value="NC_010845.1"/>
</dbReference>
<dbReference type="SMR" id="B0SI93"/>
<dbReference type="KEGG" id="lbf:LBF_4103"/>
<dbReference type="HOGENOM" id="CLU_048199_1_0_12"/>
<dbReference type="UniPathway" id="UPA00248">
    <property type="reaction ID" value="UER00314"/>
</dbReference>
<dbReference type="GO" id="GO:0005829">
    <property type="term" value="C:cytosol"/>
    <property type="evidence" value="ECO:0007669"/>
    <property type="project" value="TreeGrafter"/>
</dbReference>
<dbReference type="GO" id="GO:0004766">
    <property type="term" value="F:spermidine synthase activity"/>
    <property type="evidence" value="ECO:0007669"/>
    <property type="project" value="UniProtKB-UniRule"/>
</dbReference>
<dbReference type="GO" id="GO:0008295">
    <property type="term" value="P:spermidine biosynthetic process"/>
    <property type="evidence" value="ECO:0007669"/>
    <property type="project" value="UniProtKB-UniRule"/>
</dbReference>
<dbReference type="CDD" id="cd02440">
    <property type="entry name" value="AdoMet_MTases"/>
    <property type="match status" value="1"/>
</dbReference>
<dbReference type="FunFam" id="3.40.50.150:FF:000013">
    <property type="entry name" value="Spermidine synthase"/>
    <property type="match status" value="1"/>
</dbReference>
<dbReference type="Gene3D" id="2.30.140.10">
    <property type="entry name" value="Spermidine synthase, tetramerisation domain"/>
    <property type="match status" value="1"/>
</dbReference>
<dbReference type="Gene3D" id="3.40.50.150">
    <property type="entry name" value="Vaccinia Virus protein VP39"/>
    <property type="match status" value="1"/>
</dbReference>
<dbReference type="HAMAP" id="MF_00198">
    <property type="entry name" value="Spermidine_synth"/>
    <property type="match status" value="1"/>
</dbReference>
<dbReference type="InterPro" id="IPR030374">
    <property type="entry name" value="PABS"/>
</dbReference>
<dbReference type="InterPro" id="IPR030373">
    <property type="entry name" value="PABS_CS"/>
</dbReference>
<dbReference type="InterPro" id="IPR029063">
    <property type="entry name" value="SAM-dependent_MTases_sf"/>
</dbReference>
<dbReference type="InterPro" id="IPR001045">
    <property type="entry name" value="Spermi_synthase"/>
</dbReference>
<dbReference type="InterPro" id="IPR035246">
    <property type="entry name" value="Spermidine_synt_N"/>
</dbReference>
<dbReference type="InterPro" id="IPR037163">
    <property type="entry name" value="Spermidine_synt_N_sf"/>
</dbReference>
<dbReference type="NCBIfam" id="NF002010">
    <property type="entry name" value="PRK00811.1"/>
    <property type="match status" value="1"/>
</dbReference>
<dbReference type="NCBIfam" id="TIGR00417">
    <property type="entry name" value="speE"/>
    <property type="match status" value="1"/>
</dbReference>
<dbReference type="PANTHER" id="PTHR11558:SF11">
    <property type="entry name" value="SPERMIDINE SYNTHASE"/>
    <property type="match status" value="1"/>
</dbReference>
<dbReference type="PANTHER" id="PTHR11558">
    <property type="entry name" value="SPERMIDINE/SPERMINE SYNTHASE"/>
    <property type="match status" value="1"/>
</dbReference>
<dbReference type="Pfam" id="PF17284">
    <property type="entry name" value="Spermine_synt_N"/>
    <property type="match status" value="1"/>
</dbReference>
<dbReference type="Pfam" id="PF01564">
    <property type="entry name" value="Spermine_synth"/>
    <property type="match status" value="1"/>
</dbReference>
<dbReference type="SUPFAM" id="SSF53335">
    <property type="entry name" value="S-adenosyl-L-methionine-dependent methyltransferases"/>
    <property type="match status" value="1"/>
</dbReference>
<dbReference type="PROSITE" id="PS01330">
    <property type="entry name" value="PABS_1"/>
    <property type="match status" value="1"/>
</dbReference>
<dbReference type="PROSITE" id="PS51006">
    <property type="entry name" value="PABS_2"/>
    <property type="match status" value="1"/>
</dbReference>
<sequence length="281" mass="31816">MEIWYTEKLELEKGRAVSYRVTKTIESLQSPFQKIDIFETQSFGRMFTLDGVTMVTNKDEHSYHEMIAHIPMMSHPNPESVLVIGGGDGGTVREVLKHPSVKEVVLCEIDKAVVDISYKYFPECADAMKDPKVIHHYDDGAKFARDNKGRFDVILVDSSDPVGPAEVLFKEPFFRDMASALKPTGIIATQAESFWYHGDVITSLFEFIPKIFPEYGYYYTTIPTYPSGIIGFTFLSNAIDPYAVTPDPKRVPKGLKYYSPEIHKAAFVLPEFAKAYIKRKG</sequence>
<comment type="function">
    <text evidence="1">Catalyzes the irreversible transfer of a propylamine group from the amino donor S-adenosylmethioninamine (decarboxy-AdoMet) to putrescine (1,4-diaminobutane) to yield spermidine.</text>
</comment>
<comment type="catalytic activity">
    <reaction evidence="1">
        <text>S-adenosyl 3-(methylsulfanyl)propylamine + putrescine = S-methyl-5'-thioadenosine + spermidine + H(+)</text>
        <dbReference type="Rhea" id="RHEA:12721"/>
        <dbReference type="ChEBI" id="CHEBI:15378"/>
        <dbReference type="ChEBI" id="CHEBI:17509"/>
        <dbReference type="ChEBI" id="CHEBI:57443"/>
        <dbReference type="ChEBI" id="CHEBI:57834"/>
        <dbReference type="ChEBI" id="CHEBI:326268"/>
        <dbReference type="EC" id="2.5.1.16"/>
    </reaction>
</comment>
<comment type="pathway">
    <text evidence="1">Amine and polyamine biosynthesis; spermidine biosynthesis; spermidine from putrescine: step 1/1.</text>
</comment>
<comment type="subunit">
    <text evidence="1">Homodimer or homotetramer.</text>
</comment>
<comment type="subcellular location">
    <subcellularLocation>
        <location evidence="1">Cytoplasm</location>
    </subcellularLocation>
</comment>
<comment type="similarity">
    <text evidence="1">Belongs to the spermidine/spermine synthase family.</text>
</comment>
<protein>
    <recommendedName>
        <fullName evidence="1">Polyamine aminopropyltransferase</fullName>
    </recommendedName>
    <alternativeName>
        <fullName evidence="1">Putrescine aminopropyltransferase</fullName>
        <shortName evidence="1">PAPT</shortName>
    </alternativeName>
    <alternativeName>
        <fullName evidence="1">Spermidine synthase</fullName>
        <shortName evidence="1">SPDS</shortName>
        <shortName evidence="1">SPDSY</shortName>
        <ecNumber evidence="1">2.5.1.16</ecNumber>
    </alternativeName>
</protein>
<evidence type="ECO:0000255" key="1">
    <source>
        <dbReference type="HAMAP-Rule" id="MF_00198"/>
    </source>
</evidence>
<keyword id="KW-0963">Cytoplasm</keyword>
<keyword id="KW-0620">Polyamine biosynthesis</keyword>
<keyword id="KW-0745">Spermidine biosynthesis</keyword>
<keyword id="KW-0808">Transferase</keyword>